<organism>
    <name type="scientific">Ectopseudomonas mendocina (strain ymp)</name>
    <name type="common">Pseudomonas mendocina</name>
    <dbReference type="NCBI Taxonomy" id="399739"/>
    <lineage>
        <taxon>Bacteria</taxon>
        <taxon>Pseudomonadati</taxon>
        <taxon>Pseudomonadota</taxon>
        <taxon>Gammaproteobacteria</taxon>
        <taxon>Pseudomonadales</taxon>
        <taxon>Pseudomonadaceae</taxon>
        <taxon>Ectopseudomonas</taxon>
    </lineage>
</organism>
<proteinExistence type="inferred from homology"/>
<sequence length="200" mass="21557">MQLNVNGAQAIEVSDATFGGEFNETLVHQAVVAYMAGGRQGTKGQKSRSDVSGGGKRPWRQKGTGRARAGTTRGPIWRGGGVTFAASTRNHDQKLNKKMYRAALRSILAELVRTDRLVVVEDFAVEAPKTKALLSKLNGLGLNDVLIVSDAVDQNLYLAARNLPHVDVRDVQGSDPVSLIAYEKVLVTVSAVKKFEELLG</sequence>
<evidence type="ECO:0000255" key="1">
    <source>
        <dbReference type="HAMAP-Rule" id="MF_01328"/>
    </source>
</evidence>
<evidence type="ECO:0000256" key="2">
    <source>
        <dbReference type="SAM" id="MobiDB-lite"/>
    </source>
</evidence>
<evidence type="ECO:0000305" key="3"/>
<feature type="chain" id="PRO_1000052472" description="Large ribosomal subunit protein uL4">
    <location>
        <begin position="1"/>
        <end position="200"/>
    </location>
</feature>
<feature type="region of interest" description="Disordered" evidence="2">
    <location>
        <begin position="38"/>
        <end position="73"/>
    </location>
</feature>
<dbReference type="EMBL" id="CP000680">
    <property type="protein sequence ID" value="ABP86655.1"/>
    <property type="molecule type" value="Genomic_DNA"/>
</dbReference>
<dbReference type="SMR" id="A4XZ89"/>
<dbReference type="STRING" id="399739.Pmen_3908"/>
<dbReference type="KEGG" id="pmy:Pmen_3908"/>
<dbReference type="PATRIC" id="fig|399739.8.peg.3961"/>
<dbReference type="eggNOG" id="COG0088">
    <property type="taxonomic scope" value="Bacteria"/>
</dbReference>
<dbReference type="HOGENOM" id="CLU_041575_5_2_6"/>
<dbReference type="OrthoDB" id="9803201at2"/>
<dbReference type="GO" id="GO:1990904">
    <property type="term" value="C:ribonucleoprotein complex"/>
    <property type="evidence" value="ECO:0007669"/>
    <property type="project" value="UniProtKB-KW"/>
</dbReference>
<dbReference type="GO" id="GO:0005840">
    <property type="term" value="C:ribosome"/>
    <property type="evidence" value="ECO:0007669"/>
    <property type="project" value="UniProtKB-KW"/>
</dbReference>
<dbReference type="GO" id="GO:0019843">
    <property type="term" value="F:rRNA binding"/>
    <property type="evidence" value="ECO:0007669"/>
    <property type="project" value="UniProtKB-UniRule"/>
</dbReference>
<dbReference type="GO" id="GO:0003735">
    <property type="term" value="F:structural constituent of ribosome"/>
    <property type="evidence" value="ECO:0007669"/>
    <property type="project" value="InterPro"/>
</dbReference>
<dbReference type="GO" id="GO:0006412">
    <property type="term" value="P:translation"/>
    <property type="evidence" value="ECO:0007669"/>
    <property type="project" value="UniProtKB-UniRule"/>
</dbReference>
<dbReference type="FunFam" id="3.40.1370.10:FF:000001">
    <property type="entry name" value="50S ribosomal protein L4"/>
    <property type="match status" value="1"/>
</dbReference>
<dbReference type="Gene3D" id="3.40.1370.10">
    <property type="match status" value="1"/>
</dbReference>
<dbReference type="HAMAP" id="MF_01328_B">
    <property type="entry name" value="Ribosomal_uL4_B"/>
    <property type="match status" value="1"/>
</dbReference>
<dbReference type="InterPro" id="IPR002136">
    <property type="entry name" value="Ribosomal_uL4"/>
</dbReference>
<dbReference type="InterPro" id="IPR013005">
    <property type="entry name" value="Ribosomal_uL4-like"/>
</dbReference>
<dbReference type="InterPro" id="IPR023574">
    <property type="entry name" value="Ribosomal_uL4_dom_sf"/>
</dbReference>
<dbReference type="NCBIfam" id="TIGR03953">
    <property type="entry name" value="rplD_bact"/>
    <property type="match status" value="1"/>
</dbReference>
<dbReference type="PANTHER" id="PTHR10746">
    <property type="entry name" value="50S RIBOSOMAL PROTEIN L4"/>
    <property type="match status" value="1"/>
</dbReference>
<dbReference type="PANTHER" id="PTHR10746:SF6">
    <property type="entry name" value="LARGE RIBOSOMAL SUBUNIT PROTEIN UL4M"/>
    <property type="match status" value="1"/>
</dbReference>
<dbReference type="Pfam" id="PF00573">
    <property type="entry name" value="Ribosomal_L4"/>
    <property type="match status" value="1"/>
</dbReference>
<dbReference type="SUPFAM" id="SSF52166">
    <property type="entry name" value="Ribosomal protein L4"/>
    <property type="match status" value="1"/>
</dbReference>
<protein>
    <recommendedName>
        <fullName evidence="1">Large ribosomal subunit protein uL4</fullName>
    </recommendedName>
    <alternativeName>
        <fullName evidence="3">50S ribosomal protein L4</fullName>
    </alternativeName>
</protein>
<accession>A4XZ89</accession>
<name>RL4_ECTM1</name>
<gene>
    <name evidence="1" type="primary">rplD</name>
    <name type="ordered locus">Pmen_3908</name>
</gene>
<comment type="function">
    <text evidence="1">One of the primary rRNA binding proteins, this protein initially binds near the 5'-end of the 23S rRNA. It is important during the early stages of 50S assembly. It makes multiple contacts with different domains of the 23S rRNA in the assembled 50S subunit and ribosome.</text>
</comment>
<comment type="function">
    <text evidence="1">Forms part of the polypeptide exit tunnel.</text>
</comment>
<comment type="subunit">
    <text evidence="1">Part of the 50S ribosomal subunit.</text>
</comment>
<comment type="similarity">
    <text evidence="1">Belongs to the universal ribosomal protein uL4 family.</text>
</comment>
<reference key="1">
    <citation type="submission" date="2007-04" db="EMBL/GenBank/DDBJ databases">
        <title>Complete sequence of Pseudomonas mendocina ymp.</title>
        <authorList>
            <consortium name="US DOE Joint Genome Institute"/>
            <person name="Copeland A."/>
            <person name="Lucas S."/>
            <person name="Lapidus A."/>
            <person name="Barry K."/>
            <person name="Glavina del Rio T."/>
            <person name="Dalin E."/>
            <person name="Tice H."/>
            <person name="Pitluck S."/>
            <person name="Kiss H."/>
            <person name="Brettin T."/>
            <person name="Detter J.C."/>
            <person name="Bruce D."/>
            <person name="Han C."/>
            <person name="Schmutz J."/>
            <person name="Larimer F."/>
            <person name="Land M."/>
            <person name="Hauser L."/>
            <person name="Kyrpides N."/>
            <person name="Mikhailova N."/>
            <person name="Hersman L."/>
            <person name="Dubois J."/>
            <person name="Maurice P."/>
            <person name="Richardson P."/>
        </authorList>
    </citation>
    <scope>NUCLEOTIDE SEQUENCE [LARGE SCALE GENOMIC DNA]</scope>
    <source>
        <strain>ymp</strain>
    </source>
</reference>
<keyword id="KW-0687">Ribonucleoprotein</keyword>
<keyword id="KW-0689">Ribosomal protein</keyword>
<keyword id="KW-0694">RNA-binding</keyword>
<keyword id="KW-0699">rRNA-binding</keyword>